<protein>
    <recommendedName>
        <fullName evidence="1">Ribosomal RNA small subunit methyltransferase H</fullName>
        <ecNumber evidence="1">2.1.1.199</ecNumber>
    </recommendedName>
    <alternativeName>
        <fullName evidence="1">16S rRNA m(4)C1402 methyltransferase</fullName>
    </alternativeName>
    <alternativeName>
        <fullName evidence="1">rRNA (cytosine-N(4)-)-methyltransferase RsmH</fullName>
    </alternativeName>
</protein>
<evidence type="ECO:0000255" key="1">
    <source>
        <dbReference type="HAMAP-Rule" id="MF_01007"/>
    </source>
</evidence>
<gene>
    <name evidence="1" type="primary">rsmH</name>
    <name type="synonym">mraW</name>
    <name type="ordered locus">CLB_1479</name>
</gene>
<organism>
    <name type="scientific">Clostridium botulinum (strain ATCC 19397 / Type A)</name>
    <dbReference type="NCBI Taxonomy" id="441770"/>
    <lineage>
        <taxon>Bacteria</taxon>
        <taxon>Bacillati</taxon>
        <taxon>Bacillota</taxon>
        <taxon>Clostridia</taxon>
        <taxon>Eubacteriales</taxon>
        <taxon>Clostridiaceae</taxon>
        <taxon>Clostridium</taxon>
    </lineage>
</organism>
<sequence length="309" mass="35491">MEFKHISVLLEETIDSLNIKEDGVYVDCTLGGGGHSKEILKKLSHKGKLIGIDQDTSAIKAAKERLKDYENVIYVHNNFYNIDSILEELDIDKVDGIIMDLGVSSYQLDEASRGFSYMKDAPLDMRMNREENLSAYGVINNYEEEELFKILKNYGEEKFSRKIARFIVEKRTENPIETTGELVEIIRKAIPAKFQREGHPAKRTFQAIRIEVNKELQILNKAIEDSVNRLNKDGRLSIITFHSLEDRIVKVKFKELEKPCTCPPSFPICVCGKEPQIKIITKKPIEPSKEEKEINSRSRSAKLRVCRKI</sequence>
<name>RSMH_CLOB1</name>
<feature type="chain" id="PRO_0000386812" description="Ribosomal RNA small subunit methyltransferase H">
    <location>
        <begin position="1"/>
        <end position="309"/>
    </location>
</feature>
<feature type="binding site" evidence="1">
    <location>
        <begin position="33"/>
        <end position="35"/>
    </location>
    <ligand>
        <name>S-adenosyl-L-methionine</name>
        <dbReference type="ChEBI" id="CHEBI:59789"/>
    </ligand>
</feature>
<feature type="binding site" evidence="1">
    <location>
        <position position="53"/>
    </location>
    <ligand>
        <name>S-adenosyl-L-methionine</name>
        <dbReference type="ChEBI" id="CHEBI:59789"/>
    </ligand>
</feature>
<feature type="binding site" evidence="1">
    <location>
        <position position="79"/>
    </location>
    <ligand>
        <name>S-adenosyl-L-methionine</name>
        <dbReference type="ChEBI" id="CHEBI:59789"/>
    </ligand>
</feature>
<feature type="binding site" evidence="1">
    <location>
        <position position="100"/>
    </location>
    <ligand>
        <name>S-adenosyl-L-methionine</name>
        <dbReference type="ChEBI" id="CHEBI:59789"/>
    </ligand>
</feature>
<feature type="binding site" evidence="1">
    <location>
        <position position="107"/>
    </location>
    <ligand>
        <name>S-adenosyl-L-methionine</name>
        <dbReference type="ChEBI" id="CHEBI:59789"/>
    </ligand>
</feature>
<reference key="1">
    <citation type="journal article" date="2007" name="PLoS ONE">
        <title>Analysis of the neurotoxin complex genes in Clostridium botulinum A1-A4 and B1 strains: BoNT/A3, /Ba4 and /B1 clusters are located within plasmids.</title>
        <authorList>
            <person name="Smith T.J."/>
            <person name="Hill K.K."/>
            <person name="Foley B.T."/>
            <person name="Detter J.C."/>
            <person name="Munk A.C."/>
            <person name="Bruce D.C."/>
            <person name="Doggett N.A."/>
            <person name="Smith L.A."/>
            <person name="Marks J.D."/>
            <person name="Xie G."/>
            <person name="Brettin T.S."/>
        </authorList>
    </citation>
    <scope>NUCLEOTIDE SEQUENCE [LARGE SCALE GENOMIC DNA]</scope>
    <source>
        <strain>ATCC 19397 / Type A</strain>
    </source>
</reference>
<accession>A7FTX8</accession>
<comment type="function">
    <text evidence="1">Specifically methylates the N4 position of cytidine in position 1402 (C1402) of 16S rRNA.</text>
</comment>
<comment type="catalytic activity">
    <reaction evidence="1">
        <text>cytidine(1402) in 16S rRNA + S-adenosyl-L-methionine = N(4)-methylcytidine(1402) in 16S rRNA + S-adenosyl-L-homocysteine + H(+)</text>
        <dbReference type="Rhea" id="RHEA:42928"/>
        <dbReference type="Rhea" id="RHEA-COMP:10286"/>
        <dbReference type="Rhea" id="RHEA-COMP:10287"/>
        <dbReference type="ChEBI" id="CHEBI:15378"/>
        <dbReference type="ChEBI" id="CHEBI:57856"/>
        <dbReference type="ChEBI" id="CHEBI:59789"/>
        <dbReference type="ChEBI" id="CHEBI:74506"/>
        <dbReference type="ChEBI" id="CHEBI:82748"/>
        <dbReference type="EC" id="2.1.1.199"/>
    </reaction>
</comment>
<comment type="subcellular location">
    <subcellularLocation>
        <location evidence="1">Cytoplasm</location>
    </subcellularLocation>
</comment>
<comment type="similarity">
    <text evidence="1">Belongs to the methyltransferase superfamily. RsmH family.</text>
</comment>
<proteinExistence type="inferred from homology"/>
<keyword id="KW-0963">Cytoplasm</keyword>
<keyword id="KW-0489">Methyltransferase</keyword>
<keyword id="KW-0698">rRNA processing</keyword>
<keyword id="KW-0949">S-adenosyl-L-methionine</keyword>
<keyword id="KW-0808">Transferase</keyword>
<dbReference type="EC" id="2.1.1.199" evidence="1"/>
<dbReference type="EMBL" id="CP000726">
    <property type="protein sequence ID" value="ABS33641.1"/>
    <property type="molecule type" value="Genomic_DNA"/>
</dbReference>
<dbReference type="RefSeq" id="WP_011949033.1">
    <property type="nucleotide sequence ID" value="NC_009697.1"/>
</dbReference>
<dbReference type="SMR" id="A7FTX8"/>
<dbReference type="GeneID" id="5185709"/>
<dbReference type="KEGG" id="cba:CLB_1479"/>
<dbReference type="HOGENOM" id="CLU_038422_2_0_9"/>
<dbReference type="GO" id="GO:0005737">
    <property type="term" value="C:cytoplasm"/>
    <property type="evidence" value="ECO:0007669"/>
    <property type="project" value="UniProtKB-SubCell"/>
</dbReference>
<dbReference type="GO" id="GO:0071424">
    <property type="term" value="F:rRNA (cytosine-N4-)-methyltransferase activity"/>
    <property type="evidence" value="ECO:0007669"/>
    <property type="project" value="UniProtKB-UniRule"/>
</dbReference>
<dbReference type="GO" id="GO:0070475">
    <property type="term" value="P:rRNA base methylation"/>
    <property type="evidence" value="ECO:0007669"/>
    <property type="project" value="UniProtKB-UniRule"/>
</dbReference>
<dbReference type="FunFam" id="1.10.150.170:FF:000001">
    <property type="entry name" value="Ribosomal RNA small subunit methyltransferase H"/>
    <property type="match status" value="1"/>
</dbReference>
<dbReference type="Gene3D" id="1.10.150.170">
    <property type="entry name" value="Putative methyltransferase TM0872, insert domain"/>
    <property type="match status" value="1"/>
</dbReference>
<dbReference type="Gene3D" id="3.40.50.150">
    <property type="entry name" value="Vaccinia Virus protein VP39"/>
    <property type="match status" value="1"/>
</dbReference>
<dbReference type="HAMAP" id="MF_01007">
    <property type="entry name" value="16SrRNA_methyltr_H"/>
    <property type="match status" value="1"/>
</dbReference>
<dbReference type="InterPro" id="IPR002903">
    <property type="entry name" value="RsmH"/>
</dbReference>
<dbReference type="InterPro" id="IPR023397">
    <property type="entry name" value="SAM-dep_MeTrfase_MraW_recog"/>
</dbReference>
<dbReference type="InterPro" id="IPR029063">
    <property type="entry name" value="SAM-dependent_MTases_sf"/>
</dbReference>
<dbReference type="NCBIfam" id="TIGR00006">
    <property type="entry name" value="16S rRNA (cytosine(1402)-N(4))-methyltransferase RsmH"/>
    <property type="match status" value="1"/>
</dbReference>
<dbReference type="PANTHER" id="PTHR11265:SF0">
    <property type="entry name" value="12S RRNA N4-METHYLCYTIDINE METHYLTRANSFERASE"/>
    <property type="match status" value="1"/>
</dbReference>
<dbReference type="PANTHER" id="PTHR11265">
    <property type="entry name" value="S-ADENOSYL-METHYLTRANSFERASE MRAW"/>
    <property type="match status" value="1"/>
</dbReference>
<dbReference type="Pfam" id="PF01795">
    <property type="entry name" value="Methyltransf_5"/>
    <property type="match status" value="1"/>
</dbReference>
<dbReference type="PIRSF" id="PIRSF004486">
    <property type="entry name" value="MraW"/>
    <property type="match status" value="1"/>
</dbReference>
<dbReference type="SUPFAM" id="SSF81799">
    <property type="entry name" value="Putative methyltransferase TM0872, insert domain"/>
    <property type="match status" value="1"/>
</dbReference>
<dbReference type="SUPFAM" id="SSF53335">
    <property type="entry name" value="S-adenosyl-L-methionine-dependent methyltransferases"/>
    <property type="match status" value="1"/>
</dbReference>